<sequence>MQTSFSPATRLGRRALLFPLCLVLFEFAAYIANDMIQPGMLAVVAEFNASVEWVPTSMTAYLAGGMFLQWLLGPLSDRRGRRPVMLAGVAFFVVTCLAILLVNSIEQFIAMRFLQGIGLCFIGAVGYATIQESFEEAVCIKITALMANVALIAPLLGPLAGAALIHVAPWQTMFVLFAVLGAISFAGLWRAMPETASLKGEKLSVANMWRDYKQVLANRRFLCGSLALGFASLPLLAWIAQSPVILISGEQLSTFEYGILQVPIFGALIIGNLTLARLSGKTSIPQLIRYGAGPMIVGLMIAAGSTLYSSHAYLWMTAGLSLYAFGIGLANAGLVRLTLFASDISKGTVSAAMGMISMMIFTLGIELAKVAYLWGDSRGFNLFNLMSGLLWLGLVMVFIRRQPEAVATE</sequence>
<reference key="1">
    <citation type="journal article" date="2010" name="J. Bacteriol.">
        <title>Genome sequence of the deep-rooted Yersinia pestis strain Angola reveals new insights into the evolution and pangenome of the plague bacterium.</title>
        <authorList>
            <person name="Eppinger M."/>
            <person name="Worsham P.L."/>
            <person name="Nikolich M.P."/>
            <person name="Riley D.R."/>
            <person name="Sebastian Y."/>
            <person name="Mou S."/>
            <person name="Achtman M."/>
            <person name="Lindler L.E."/>
            <person name="Ravel J."/>
        </authorList>
    </citation>
    <scope>NUCLEOTIDE SEQUENCE [LARGE SCALE GENOMIC DNA]</scope>
    <source>
        <strain>Angola</strain>
    </source>
</reference>
<dbReference type="EMBL" id="CP000901">
    <property type="protein sequence ID" value="ABX84978.1"/>
    <property type="status" value="ALT_INIT"/>
    <property type="molecule type" value="Genomic_DNA"/>
</dbReference>
<dbReference type="RefSeq" id="WP_002215753.1">
    <property type="nucleotide sequence ID" value="NZ_CP009935.1"/>
</dbReference>
<dbReference type="SMR" id="A9R4E0"/>
<dbReference type="KEGG" id="ypg:YpAngola_A3760"/>
<dbReference type="PATRIC" id="fig|349746.12.peg.468"/>
<dbReference type="GO" id="GO:0005886">
    <property type="term" value="C:plasma membrane"/>
    <property type="evidence" value="ECO:0007669"/>
    <property type="project" value="UniProtKB-SubCell"/>
</dbReference>
<dbReference type="GO" id="GO:0015385">
    <property type="term" value="F:sodium:proton antiporter activity"/>
    <property type="evidence" value="ECO:0007669"/>
    <property type="project" value="TreeGrafter"/>
</dbReference>
<dbReference type="GO" id="GO:0046677">
    <property type="term" value="P:response to antibiotic"/>
    <property type="evidence" value="ECO:0007669"/>
    <property type="project" value="UniProtKB-KW"/>
</dbReference>
<dbReference type="GO" id="GO:1990961">
    <property type="term" value="P:xenobiotic detoxification by transmembrane export across the plasma membrane"/>
    <property type="evidence" value="ECO:0007669"/>
    <property type="project" value="TreeGrafter"/>
</dbReference>
<dbReference type="CDD" id="cd17320">
    <property type="entry name" value="MFS_MdfA_MDR_like"/>
    <property type="match status" value="1"/>
</dbReference>
<dbReference type="Gene3D" id="1.20.1720.10">
    <property type="entry name" value="Multidrug resistance protein D"/>
    <property type="match status" value="1"/>
</dbReference>
<dbReference type="InterPro" id="IPR011701">
    <property type="entry name" value="MFS"/>
</dbReference>
<dbReference type="InterPro" id="IPR020846">
    <property type="entry name" value="MFS_dom"/>
</dbReference>
<dbReference type="InterPro" id="IPR036259">
    <property type="entry name" value="MFS_trans_sf"/>
</dbReference>
<dbReference type="NCBIfam" id="NF011931">
    <property type="entry name" value="PRK15402.1"/>
    <property type="match status" value="1"/>
</dbReference>
<dbReference type="PANTHER" id="PTHR23502">
    <property type="entry name" value="MAJOR FACILITATOR SUPERFAMILY"/>
    <property type="match status" value="1"/>
</dbReference>
<dbReference type="PANTHER" id="PTHR23502:SF43">
    <property type="entry name" value="MULTIDRUG TRANSPORTER MDFA"/>
    <property type="match status" value="1"/>
</dbReference>
<dbReference type="Pfam" id="PF07690">
    <property type="entry name" value="MFS_1"/>
    <property type="match status" value="1"/>
</dbReference>
<dbReference type="SUPFAM" id="SSF103473">
    <property type="entry name" value="MFS general substrate transporter"/>
    <property type="match status" value="1"/>
</dbReference>
<dbReference type="PROSITE" id="PS50850">
    <property type="entry name" value="MFS"/>
    <property type="match status" value="1"/>
</dbReference>
<keyword id="KW-0046">Antibiotic resistance</keyword>
<keyword id="KW-0997">Cell inner membrane</keyword>
<keyword id="KW-1003">Cell membrane</keyword>
<keyword id="KW-0472">Membrane</keyword>
<keyword id="KW-0812">Transmembrane</keyword>
<keyword id="KW-1133">Transmembrane helix</keyword>
<keyword id="KW-0813">Transport</keyword>
<proteinExistence type="inferred from homology"/>
<organism>
    <name type="scientific">Yersinia pestis bv. Antiqua (strain Angola)</name>
    <dbReference type="NCBI Taxonomy" id="349746"/>
    <lineage>
        <taxon>Bacteria</taxon>
        <taxon>Pseudomonadati</taxon>
        <taxon>Pseudomonadota</taxon>
        <taxon>Gammaproteobacteria</taxon>
        <taxon>Enterobacterales</taxon>
        <taxon>Yersiniaceae</taxon>
        <taxon>Yersinia</taxon>
    </lineage>
</organism>
<gene>
    <name type="primary">mdfA</name>
    <name type="ordered locus">YpAngola_A3760</name>
</gene>
<protein>
    <recommendedName>
        <fullName>Multidrug transporter MdfA</fullName>
    </recommendedName>
</protein>
<comment type="function">
    <text evidence="1">Efflux pump driven by the proton motive force. Confers resistance to a broad spectrum of chemically unrelated drugs (By similarity).</text>
</comment>
<comment type="subunit">
    <text evidence="1">Monomer.</text>
</comment>
<comment type="subcellular location">
    <subcellularLocation>
        <location evidence="1">Cell inner membrane</location>
        <topology evidence="1">Multi-pass membrane protein</topology>
    </subcellularLocation>
</comment>
<comment type="similarity">
    <text evidence="3">Belongs to the major facilitator superfamily. MdfA family.</text>
</comment>
<comment type="sequence caution" evidence="3">
    <conflict type="erroneous initiation">
        <sequence resource="EMBL-CDS" id="ABX84978"/>
    </conflict>
    <text>Truncated N-terminus.</text>
</comment>
<name>MDFA_YERPG</name>
<feature type="chain" id="PRO_0000405342" description="Multidrug transporter MdfA">
    <location>
        <begin position="1"/>
        <end position="409"/>
    </location>
</feature>
<feature type="topological domain" description="Cytoplasmic" evidence="2">
    <location>
        <begin position="1"/>
        <end position="15"/>
    </location>
</feature>
<feature type="transmembrane region" description="Helical" evidence="2">
    <location>
        <begin position="16"/>
        <end position="36"/>
    </location>
</feature>
<feature type="topological domain" description="Periplasmic" evidence="2">
    <location>
        <begin position="37"/>
        <end position="52"/>
    </location>
</feature>
<feature type="transmembrane region" description="Helical" evidence="2">
    <location>
        <begin position="53"/>
        <end position="73"/>
    </location>
</feature>
<feature type="topological domain" description="Cytoplasmic" evidence="2">
    <location>
        <begin position="74"/>
        <end position="82"/>
    </location>
</feature>
<feature type="transmembrane region" description="Helical" evidence="2">
    <location>
        <begin position="83"/>
        <end position="103"/>
    </location>
</feature>
<feature type="topological domain" description="Periplasmic" evidence="2">
    <location>
        <begin position="104"/>
        <end position="107"/>
    </location>
</feature>
<feature type="transmembrane region" description="Helical" evidence="2">
    <location>
        <begin position="108"/>
        <end position="128"/>
    </location>
</feature>
<feature type="topological domain" description="Cytoplasmic" evidence="2">
    <location>
        <begin position="129"/>
        <end position="144"/>
    </location>
</feature>
<feature type="transmembrane region" description="Helical" evidence="2">
    <location>
        <begin position="145"/>
        <end position="165"/>
    </location>
</feature>
<feature type="topological domain" description="Periplasmic" evidence="2">
    <location>
        <begin position="166"/>
        <end position="168"/>
    </location>
</feature>
<feature type="transmembrane region" description="Helical" evidence="2">
    <location>
        <begin position="169"/>
        <end position="189"/>
    </location>
</feature>
<feature type="topological domain" description="Cytoplasmic" evidence="2">
    <location>
        <begin position="190"/>
        <end position="226"/>
    </location>
</feature>
<feature type="transmembrane region" description="Helical" evidence="2">
    <location>
        <begin position="227"/>
        <end position="247"/>
    </location>
</feature>
<feature type="topological domain" description="Periplasmic" evidence="2">
    <location>
        <begin position="248"/>
        <end position="254"/>
    </location>
</feature>
<feature type="transmembrane region" description="Helical" evidence="2">
    <location>
        <begin position="255"/>
        <end position="275"/>
    </location>
</feature>
<feature type="topological domain" description="Cytoplasmic" evidence="2">
    <location>
        <begin position="276"/>
        <end position="286"/>
    </location>
</feature>
<feature type="transmembrane region" description="Helical" evidence="2">
    <location>
        <begin position="287"/>
        <end position="307"/>
    </location>
</feature>
<feature type="topological domain" description="Periplasmic" evidence="2">
    <location>
        <begin position="308"/>
        <end position="314"/>
    </location>
</feature>
<feature type="transmembrane region" description="Helical" evidence="2">
    <location>
        <begin position="315"/>
        <end position="335"/>
    </location>
</feature>
<feature type="topological domain" description="Cytoplasmic" evidence="2">
    <location>
        <begin position="336"/>
        <end position="347"/>
    </location>
</feature>
<feature type="transmembrane region" description="Helical" evidence="2">
    <location>
        <begin position="348"/>
        <end position="368"/>
    </location>
</feature>
<feature type="topological domain" description="Periplasmic" evidence="2">
    <location>
        <begin position="369"/>
        <end position="378"/>
    </location>
</feature>
<feature type="transmembrane region" description="Helical" evidence="2">
    <location>
        <begin position="379"/>
        <end position="399"/>
    </location>
</feature>
<feature type="topological domain" description="Cytoplasmic" evidence="2">
    <location>
        <begin position="400"/>
        <end position="409"/>
    </location>
</feature>
<accession>A9R4E0</accession>
<evidence type="ECO:0000250" key="1"/>
<evidence type="ECO:0000255" key="2"/>
<evidence type="ECO:0000305" key="3"/>